<feature type="chain" id="PRO_0000148913" description="Matrix Gla protein">
    <location>
        <begin position="1"/>
        <end position="30" status="greater than"/>
    </location>
</feature>
<feature type="modified residue" description="Phosphoserine" evidence="1">
    <location>
        <position position="2"/>
    </location>
</feature>
<feature type="modified residue" description="Phosphoserine" evidence="1">
    <location>
        <position position="3"/>
    </location>
</feature>
<feature type="modified residue" description="Phosphoserine" evidence="1">
    <location>
        <position position="5"/>
    </location>
</feature>
<feature type="non-terminal residue" evidence="2">
    <location>
        <position position="30"/>
    </location>
</feature>
<dbReference type="SMR" id="P83347"/>
<dbReference type="GO" id="GO:0031012">
    <property type="term" value="C:extracellular matrix"/>
    <property type="evidence" value="ECO:0000304"/>
    <property type="project" value="UniProtKB"/>
</dbReference>
<dbReference type="GO" id="GO:0005576">
    <property type="term" value="C:extracellular region"/>
    <property type="evidence" value="ECO:0007669"/>
    <property type="project" value="UniProtKB-SubCell"/>
</dbReference>
<dbReference type="GO" id="GO:0051216">
    <property type="term" value="P:cartilage development"/>
    <property type="evidence" value="ECO:0007669"/>
    <property type="project" value="UniProtKB-KW"/>
</dbReference>
<dbReference type="GO" id="GO:0030154">
    <property type="term" value="P:cell differentiation"/>
    <property type="evidence" value="ECO:0007669"/>
    <property type="project" value="UniProtKB-KW"/>
</dbReference>
<keyword id="KW-0891">Chondrogenesis</keyword>
<keyword id="KW-0217">Developmental protein</keyword>
<keyword id="KW-0221">Differentiation</keyword>
<keyword id="KW-0903">Direct protein sequencing</keyword>
<keyword id="KW-0301">Gamma-carboxyglutamic acid</keyword>
<keyword id="KW-0597">Phosphoprotein</keyword>
<keyword id="KW-0964">Secreted</keyword>
<comment type="function">
    <text>Associates with the organic matrix of calcified cartilage.</text>
</comment>
<comment type="subcellular location">
    <subcellularLocation>
        <location evidence="3">Secreted</location>
    </subcellularLocation>
</comment>
<comment type="PTM">
    <text evidence="3">Requires vitamin K-dependent gamma-carboxylation for its function.</text>
</comment>
<comment type="similarity">
    <text evidence="3">Belongs to the osteocalcin/matrix Gla protein family.</text>
</comment>
<organism>
    <name type="scientific">Prionace glauca</name>
    <name type="common">Blue shark</name>
    <name type="synonym">Squalus glaucus</name>
    <dbReference type="NCBI Taxonomy" id="7815"/>
    <lineage>
        <taxon>Eukaryota</taxon>
        <taxon>Metazoa</taxon>
        <taxon>Chordata</taxon>
        <taxon>Craniata</taxon>
        <taxon>Vertebrata</taxon>
        <taxon>Chondrichthyes</taxon>
        <taxon>Elasmobranchii</taxon>
        <taxon>Galeomorphii</taxon>
        <taxon>Galeoidea</taxon>
        <taxon>Carcharhiniformes</taxon>
        <taxon>Carcharhinidae</taxon>
        <taxon>Prionace</taxon>
    </lineage>
</organism>
<proteinExistence type="evidence at protein level"/>
<sequence>DSSESNEIDDVLFLGRRDANSFMKYPQLGN</sequence>
<reference evidence="3" key="1">
    <citation type="journal article" date="2004" name="Calcif. Tissue Int.">
        <title>Characterization of osteocalcin (BGP) and matrix Gla protein (MGP) fish specific antibodies: validation for immunodetection studies in lower vertebrates.</title>
        <authorList>
            <person name="Simes D.C."/>
            <person name="Williamson M.K."/>
            <person name="Schaff B.J."/>
            <person name="Gavaia P.J."/>
            <person name="Ingleton P.M."/>
            <person name="Price P.A."/>
            <person name="Cancela M.L."/>
        </authorList>
    </citation>
    <scope>PROTEIN SEQUENCE</scope>
    <source>
        <tissue>Cartilage</tissue>
    </source>
</reference>
<protein>
    <recommendedName>
        <fullName>Matrix Gla protein</fullName>
        <shortName>MGP</shortName>
    </recommendedName>
</protein>
<name>MGP_PRIGL</name>
<evidence type="ECO:0000250" key="1">
    <source>
        <dbReference type="UniProtKB" id="P56620"/>
    </source>
</evidence>
<evidence type="ECO:0000303" key="2">
    <source>
    </source>
</evidence>
<evidence type="ECO:0000305" key="3"/>
<gene>
    <name type="primary">mgp</name>
</gene>
<accession>P83347</accession>